<protein>
    <recommendedName>
        <fullName>Purine nucleoside phosphorylase Rv2149c</fullName>
        <ecNumber evidence="2">2.4.2.1</ecNumber>
    </recommendedName>
    <alternativeName>
        <fullName>Adenosine deaminase Rv2149c</fullName>
        <ecNumber evidence="2">3.5.4.4</ecNumber>
    </alternativeName>
    <alternativeName>
        <fullName>S-methyl-5'-thioadenosine phosphorylase Rv2149c</fullName>
        <ecNumber evidence="2">2.4.2.28</ecNumber>
    </alternativeName>
</protein>
<accession>P9WKD5</accession>
<accession>L0T8Z8</accession>
<accession>O06227</accession>
<accession>P67256</accession>
<sequence>MLASTRHIARGDTGNVSVRIRRVTTTRAGGVSAPPFDTFNLGDHVGDDPAAVAANRARLAAAIGLPGNRVVWMNQVHGDRVELVDQPRNTALDDTDGLVTATPRLALAVVTADCVPVLMADARAGIAAAVHAGRAGAQRGVVVRALEVMLSLGAQVRDISALLGPAVSGRNYEVPAAMADEVEAALPGSRTTTAAGTPGVDLRAGIACQLRDLGVESIDVDPRCTVADPTLFSHRRDAPTGRFASLVWME</sequence>
<dbReference type="EC" id="2.4.2.1" evidence="2"/>
<dbReference type="EC" id="3.5.4.4" evidence="2"/>
<dbReference type="EC" id="2.4.2.28" evidence="2"/>
<dbReference type="EMBL" id="AL123456">
    <property type="protein sequence ID" value="CCP44925.1"/>
    <property type="molecule type" value="Genomic_DNA"/>
</dbReference>
<dbReference type="PIR" id="A70579">
    <property type="entry name" value="A70579"/>
</dbReference>
<dbReference type="RefSeq" id="WP_003411140.1">
    <property type="nucleotide sequence ID" value="NC_000962.3"/>
</dbReference>
<dbReference type="SMR" id="P9WKD5"/>
<dbReference type="FunCoup" id="P9WKD5">
    <property type="interactions" value="100"/>
</dbReference>
<dbReference type="STRING" id="83332.Rv2149c"/>
<dbReference type="PaxDb" id="83332-Rv2149c"/>
<dbReference type="DNASU" id="888121"/>
<dbReference type="KEGG" id="mtu:Rv2149c"/>
<dbReference type="KEGG" id="mtv:RVBD_2149c"/>
<dbReference type="PATRIC" id="fig|83332.111.peg.2395"/>
<dbReference type="TubercuList" id="Rv2149c"/>
<dbReference type="eggNOG" id="COG1496">
    <property type="taxonomic scope" value="Bacteria"/>
</dbReference>
<dbReference type="InParanoid" id="P9WKD5"/>
<dbReference type="OrthoDB" id="4279at2"/>
<dbReference type="PhylomeDB" id="P9WKD5"/>
<dbReference type="Proteomes" id="UP000001584">
    <property type="component" value="Chromosome"/>
</dbReference>
<dbReference type="GO" id="GO:0009274">
    <property type="term" value="C:peptidoglycan-based cell wall"/>
    <property type="evidence" value="ECO:0007005"/>
    <property type="project" value="MTBBASE"/>
</dbReference>
<dbReference type="GO" id="GO:0004000">
    <property type="term" value="F:adenosine deaminase activity"/>
    <property type="evidence" value="ECO:0007669"/>
    <property type="project" value="RHEA"/>
</dbReference>
<dbReference type="GO" id="GO:0005507">
    <property type="term" value="F:copper ion binding"/>
    <property type="evidence" value="ECO:0000318"/>
    <property type="project" value="GO_Central"/>
</dbReference>
<dbReference type="GO" id="GO:0016491">
    <property type="term" value="F:oxidoreductase activity"/>
    <property type="evidence" value="ECO:0007669"/>
    <property type="project" value="UniProtKB-KW"/>
</dbReference>
<dbReference type="GO" id="GO:0017061">
    <property type="term" value="F:S-methyl-5-thioadenosine phosphorylase activity"/>
    <property type="evidence" value="ECO:0007669"/>
    <property type="project" value="UniProtKB-EC"/>
</dbReference>
<dbReference type="CDD" id="cd16833">
    <property type="entry name" value="YfiH"/>
    <property type="match status" value="1"/>
</dbReference>
<dbReference type="FunFam" id="3.60.140.10:FF:000003">
    <property type="entry name" value="Polyphenol oxidase"/>
    <property type="match status" value="1"/>
</dbReference>
<dbReference type="Gene3D" id="3.60.140.10">
    <property type="entry name" value="CNF1/YfiH-like putative cysteine hydrolases"/>
    <property type="match status" value="1"/>
</dbReference>
<dbReference type="InterPro" id="IPR003730">
    <property type="entry name" value="Cu_polyphenol_OxRdtase"/>
</dbReference>
<dbReference type="InterPro" id="IPR038371">
    <property type="entry name" value="Cu_polyphenol_OxRdtase_sf"/>
</dbReference>
<dbReference type="InterPro" id="IPR011324">
    <property type="entry name" value="Cytotoxic_necrot_fac-like_cat"/>
</dbReference>
<dbReference type="NCBIfam" id="TIGR00726">
    <property type="entry name" value="peptidoglycan editing factor PgeF"/>
    <property type="match status" value="1"/>
</dbReference>
<dbReference type="PANTHER" id="PTHR30616:SF2">
    <property type="entry name" value="PURINE NUCLEOSIDE PHOSPHORYLASE LACC1"/>
    <property type="match status" value="1"/>
</dbReference>
<dbReference type="PANTHER" id="PTHR30616">
    <property type="entry name" value="UNCHARACTERIZED PROTEIN YFIH"/>
    <property type="match status" value="1"/>
</dbReference>
<dbReference type="Pfam" id="PF02578">
    <property type="entry name" value="Cu-oxidase_4"/>
    <property type="match status" value="1"/>
</dbReference>
<dbReference type="SUPFAM" id="SSF64438">
    <property type="entry name" value="CNF1/YfiH-like putative cysteine hydrolases"/>
    <property type="match status" value="1"/>
</dbReference>
<comment type="function">
    <text evidence="2">Purine nucleoside enzyme that catalyzes the phosphorolysis of adenosine and inosine nucleosides, yielding D-ribose 1-phosphate and the respective free bases, adenine and hypoxanthine. Also catalyzes the phosphorolysis of S-methyl-5'-thioadenosine into adenine and S-methyl-5-thio-alpha-D-ribose 1-phosphate. Also has adenosine deaminase activity.</text>
</comment>
<comment type="catalytic activity">
    <reaction evidence="2">
        <text>adenosine + phosphate = alpha-D-ribose 1-phosphate + adenine</text>
        <dbReference type="Rhea" id="RHEA:27642"/>
        <dbReference type="ChEBI" id="CHEBI:16335"/>
        <dbReference type="ChEBI" id="CHEBI:16708"/>
        <dbReference type="ChEBI" id="CHEBI:43474"/>
        <dbReference type="ChEBI" id="CHEBI:57720"/>
        <dbReference type="EC" id="2.4.2.1"/>
    </reaction>
    <physiologicalReaction direction="left-to-right" evidence="2">
        <dbReference type="Rhea" id="RHEA:27643"/>
    </physiologicalReaction>
</comment>
<comment type="catalytic activity">
    <reaction evidence="2">
        <text>S-methyl-5'-thioadenosine + phosphate = 5-(methylsulfanyl)-alpha-D-ribose 1-phosphate + adenine</text>
        <dbReference type="Rhea" id="RHEA:11852"/>
        <dbReference type="ChEBI" id="CHEBI:16708"/>
        <dbReference type="ChEBI" id="CHEBI:17509"/>
        <dbReference type="ChEBI" id="CHEBI:43474"/>
        <dbReference type="ChEBI" id="CHEBI:58533"/>
        <dbReference type="EC" id="2.4.2.28"/>
    </reaction>
    <physiologicalReaction direction="left-to-right" evidence="2">
        <dbReference type="Rhea" id="RHEA:11853"/>
    </physiologicalReaction>
</comment>
<comment type="catalytic activity">
    <reaction evidence="2">
        <text>inosine + phosphate = alpha-D-ribose 1-phosphate + hypoxanthine</text>
        <dbReference type="Rhea" id="RHEA:27646"/>
        <dbReference type="ChEBI" id="CHEBI:17368"/>
        <dbReference type="ChEBI" id="CHEBI:17596"/>
        <dbReference type="ChEBI" id="CHEBI:43474"/>
        <dbReference type="ChEBI" id="CHEBI:57720"/>
        <dbReference type="EC" id="2.4.2.1"/>
    </reaction>
    <physiologicalReaction direction="left-to-right" evidence="2">
        <dbReference type="Rhea" id="RHEA:27647"/>
    </physiologicalReaction>
</comment>
<comment type="catalytic activity">
    <reaction evidence="2">
        <text>adenosine + H2O + H(+) = inosine + NH4(+)</text>
        <dbReference type="Rhea" id="RHEA:24408"/>
        <dbReference type="ChEBI" id="CHEBI:15377"/>
        <dbReference type="ChEBI" id="CHEBI:15378"/>
        <dbReference type="ChEBI" id="CHEBI:16335"/>
        <dbReference type="ChEBI" id="CHEBI:17596"/>
        <dbReference type="ChEBI" id="CHEBI:28938"/>
        <dbReference type="EC" id="3.5.4.4"/>
    </reaction>
    <physiologicalReaction direction="left-to-right" evidence="2">
        <dbReference type="Rhea" id="RHEA:24409"/>
    </physiologicalReaction>
</comment>
<comment type="cofactor">
    <cofactor evidence="1">
        <name>Cu(2+)</name>
        <dbReference type="ChEBI" id="CHEBI:29036"/>
    </cofactor>
    <cofactor evidence="2">
        <name>Zn(2+)</name>
        <dbReference type="ChEBI" id="CHEBI:29105"/>
    </cofactor>
</comment>
<comment type="subunit">
    <text evidence="3">Homodimer.</text>
</comment>
<comment type="similarity">
    <text evidence="4">Belongs to the purine nucleoside phosphorylase YfiH/LACC1 family.</text>
</comment>
<proteinExistence type="evidence at protein level"/>
<name>PURNU_MYCTU</name>
<keyword id="KW-0186">Copper</keyword>
<keyword id="KW-0378">Hydrolase</keyword>
<keyword id="KW-0479">Metal-binding</keyword>
<keyword id="KW-0560">Oxidoreductase</keyword>
<keyword id="KW-1185">Reference proteome</keyword>
<keyword id="KW-0808">Transferase</keyword>
<keyword id="KW-0862">Zinc</keyword>
<organism>
    <name type="scientific">Mycobacterium tuberculosis (strain ATCC 25618 / H37Rv)</name>
    <dbReference type="NCBI Taxonomy" id="83332"/>
    <lineage>
        <taxon>Bacteria</taxon>
        <taxon>Bacillati</taxon>
        <taxon>Actinomycetota</taxon>
        <taxon>Actinomycetes</taxon>
        <taxon>Mycobacteriales</taxon>
        <taxon>Mycobacteriaceae</taxon>
        <taxon>Mycobacterium</taxon>
        <taxon>Mycobacterium tuberculosis complex</taxon>
    </lineage>
</organism>
<feature type="chain" id="PRO_0000163166" description="Purine nucleoside phosphorylase Rv2149c">
    <location>
        <begin position="1"/>
        <end position="250"/>
    </location>
</feature>
<feature type="binding site" evidence="2">
    <location>
        <position position="77"/>
    </location>
    <ligand>
        <name>Zn(2+)</name>
        <dbReference type="ChEBI" id="CHEBI:29105"/>
        <note>catalytic</note>
    </ligand>
</feature>
<feature type="binding site" evidence="2">
    <location>
        <position position="114"/>
    </location>
    <ligand>
        <name>Zn(2+)</name>
        <dbReference type="ChEBI" id="CHEBI:29105"/>
        <note>catalytic</note>
    </ligand>
</feature>
<feature type="binding site" evidence="2">
    <location>
        <position position="131"/>
    </location>
    <ligand>
        <name>Zn(2+)</name>
        <dbReference type="ChEBI" id="CHEBI:29105"/>
        <note>catalytic</note>
    </ligand>
</feature>
<gene>
    <name type="ordered locus">Rv2149c</name>
    <name type="ORF">MTCY270.19</name>
</gene>
<evidence type="ECO:0000250" key="1">
    <source>
        <dbReference type="UniProtKB" id="P33644"/>
    </source>
</evidence>
<evidence type="ECO:0000250" key="2">
    <source>
        <dbReference type="UniProtKB" id="P84138"/>
    </source>
</evidence>
<evidence type="ECO:0000250" key="3">
    <source>
        <dbReference type="UniProtKB" id="Q1EIR0"/>
    </source>
</evidence>
<evidence type="ECO:0000305" key="4"/>
<reference key="1">
    <citation type="journal article" date="1998" name="Nature">
        <title>Deciphering the biology of Mycobacterium tuberculosis from the complete genome sequence.</title>
        <authorList>
            <person name="Cole S.T."/>
            <person name="Brosch R."/>
            <person name="Parkhill J."/>
            <person name="Garnier T."/>
            <person name="Churcher C.M."/>
            <person name="Harris D.E."/>
            <person name="Gordon S.V."/>
            <person name="Eiglmeier K."/>
            <person name="Gas S."/>
            <person name="Barry C.E. III"/>
            <person name="Tekaia F."/>
            <person name="Badcock K."/>
            <person name="Basham D."/>
            <person name="Brown D."/>
            <person name="Chillingworth T."/>
            <person name="Connor R."/>
            <person name="Davies R.M."/>
            <person name="Devlin K."/>
            <person name="Feltwell T."/>
            <person name="Gentles S."/>
            <person name="Hamlin N."/>
            <person name="Holroyd S."/>
            <person name="Hornsby T."/>
            <person name="Jagels K."/>
            <person name="Krogh A."/>
            <person name="McLean J."/>
            <person name="Moule S."/>
            <person name="Murphy L.D."/>
            <person name="Oliver S."/>
            <person name="Osborne J."/>
            <person name="Quail M.A."/>
            <person name="Rajandream M.A."/>
            <person name="Rogers J."/>
            <person name="Rutter S."/>
            <person name="Seeger K."/>
            <person name="Skelton S."/>
            <person name="Squares S."/>
            <person name="Squares R."/>
            <person name="Sulston J.E."/>
            <person name="Taylor K."/>
            <person name="Whitehead S."/>
            <person name="Barrell B.G."/>
        </authorList>
    </citation>
    <scope>NUCLEOTIDE SEQUENCE [LARGE SCALE GENOMIC DNA]</scope>
    <source>
        <strain>ATCC 25618 / H37Rv</strain>
    </source>
</reference>
<reference key="2">
    <citation type="journal article" date="2011" name="Mol. Cell. Proteomics">
        <title>Proteogenomic analysis of Mycobacterium tuberculosis by high resolution mass spectrometry.</title>
        <authorList>
            <person name="Kelkar D.S."/>
            <person name="Kumar D."/>
            <person name="Kumar P."/>
            <person name="Balakrishnan L."/>
            <person name="Muthusamy B."/>
            <person name="Yadav A.K."/>
            <person name="Shrivastava P."/>
            <person name="Marimuthu A."/>
            <person name="Anand S."/>
            <person name="Sundaram H."/>
            <person name="Kingsbury R."/>
            <person name="Harsha H.C."/>
            <person name="Nair B."/>
            <person name="Prasad T.S."/>
            <person name="Chauhan D.S."/>
            <person name="Katoch K."/>
            <person name="Katoch V.M."/>
            <person name="Kumar P."/>
            <person name="Chaerkady R."/>
            <person name="Ramachandran S."/>
            <person name="Dash D."/>
            <person name="Pandey A."/>
        </authorList>
    </citation>
    <scope>IDENTIFICATION BY MASS SPECTROMETRY [LARGE SCALE ANALYSIS]</scope>
    <source>
        <strain>ATCC 25618 / H37Rv</strain>
    </source>
</reference>